<name>VE2_COPV6</name>
<keyword id="KW-0010">Activator</keyword>
<keyword id="KW-0235">DNA replication</keyword>
<keyword id="KW-0238">DNA-binding</keyword>
<keyword id="KW-0244">Early protein</keyword>
<keyword id="KW-1048">Host nucleus</keyword>
<keyword id="KW-0597">Phosphoprotein</keyword>
<keyword id="KW-1185">Reference proteome</keyword>
<keyword id="KW-0678">Repressor</keyword>
<keyword id="KW-0804">Transcription</keyword>
<keyword id="KW-0805">Transcription regulation</keyword>
<evidence type="ECO:0000255" key="1">
    <source>
        <dbReference type="HAMAP-Rule" id="MF_04001"/>
    </source>
</evidence>
<evidence type="ECO:0000256" key="2">
    <source>
        <dbReference type="SAM" id="MobiDB-lite"/>
    </source>
</evidence>
<reference key="1">
    <citation type="journal article" date="1994" name="Virology">
        <title>Canine oral papillomavirus genomic sequence: a unique 1.5-kb intervening sequence between the E2 and L2 open reading frames.</title>
        <authorList>
            <person name="Delius H."/>
            <person name="van Ranst M.A."/>
            <person name="Jenson A.B."/>
            <person name="zur Hausen H."/>
            <person name="Sundberg J.P."/>
        </authorList>
    </citation>
    <scope>NUCLEOTIDE SEQUENCE [GENOMIC DNA]</scope>
</reference>
<reference key="2">
    <citation type="journal article" date="1995" name="Int. J. Oncol.">
        <title>Nucleotide sequence of a canine oral papillomavirus containing a long noncoding region.</title>
        <authorList>
            <person name="Isegawa N."/>
            <person name="Ohta M."/>
            <person name="Shirasawa H."/>
            <person name="Tokita H."/>
            <person name="Simizu B."/>
            <person name="Yamaura A."/>
        </authorList>
    </citation>
    <scope>NUCLEOTIDE SEQUENCE [GENOMIC DNA]</scope>
</reference>
<organismHost>
    <name type="scientific">Canis lupus familiaris</name>
    <name type="common">Dog</name>
    <name type="synonym">Canis familiaris</name>
    <dbReference type="NCBI Taxonomy" id="9615"/>
</organismHost>
<gene>
    <name evidence="1" type="primary">E2</name>
</gene>
<accession>Q89420</accession>
<feature type="chain" id="PRO_0000133244" description="Regulatory protein E2">
    <location>
        <begin position="1"/>
        <end position="385"/>
    </location>
</feature>
<feature type="region of interest" description="Transactivation domain" evidence="1">
    <location>
        <begin position="1"/>
        <end position="199"/>
    </location>
</feature>
<feature type="region of interest" description="Disordered" evidence="2">
    <location>
        <begin position="189"/>
        <end position="282"/>
    </location>
</feature>
<feature type="region of interest" description="DNA-binding domain" evidence="1">
    <location>
        <begin position="298"/>
        <end position="385"/>
    </location>
</feature>
<feature type="compositionally biased region" description="Polar residues" evidence="2">
    <location>
        <begin position="189"/>
        <end position="201"/>
    </location>
</feature>
<feature type="compositionally biased region" description="Basic residues" evidence="2">
    <location>
        <begin position="225"/>
        <end position="247"/>
    </location>
</feature>
<feature type="compositionally biased region" description="Low complexity" evidence="2">
    <location>
        <begin position="261"/>
        <end position="275"/>
    </location>
</feature>
<dbReference type="EMBL" id="D55633">
    <property type="protein sequence ID" value="BAA09501.1"/>
    <property type="molecule type" value="Genomic_DNA"/>
</dbReference>
<dbReference type="EMBL" id="L22695">
    <property type="protein sequence ID" value="AAA61747.1"/>
    <property type="molecule type" value="Genomic_DNA"/>
</dbReference>
<dbReference type="RefSeq" id="NP_056816.1">
    <property type="nucleotide sequence ID" value="NC_001619.1"/>
</dbReference>
<dbReference type="SMR" id="Q89420"/>
<dbReference type="GeneID" id="1497241"/>
<dbReference type="KEGG" id="vg:1497241"/>
<dbReference type="Proteomes" id="UP000008788">
    <property type="component" value="Segment"/>
</dbReference>
<dbReference type="Proteomes" id="UP000097271">
    <property type="component" value="Genome"/>
</dbReference>
<dbReference type="GO" id="GO:0042025">
    <property type="term" value="C:host cell nucleus"/>
    <property type="evidence" value="ECO:0007669"/>
    <property type="project" value="UniProtKB-SubCell"/>
</dbReference>
<dbReference type="GO" id="GO:0003677">
    <property type="term" value="F:DNA binding"/>
    <property type="evidence" value="ECO:0007669"/>
    <property type="project" value="UniProtKB-UniRule"/>
</dbReference>
<dbReference type="GO" id="GO:0003700">
    <property type="term" value="F:DNA-binding transcription factor activity"/>
    <property type="evidence" value="ECO:0007669"/>
    <property type="project" value="UniProtKB-UniRule"/>
</dbReference>
<dbReference type="GO" id="GO:0000166">
    <property type="term" value="F:nucleotide binding"/>
    <property type="evidence" value="ECO:0007669"/>
    <property type="project" value="UniProtKB-UniRule"/>
</dbReference>
<dbReference type="GO" id="GO:0006260">
    <property type="term" value="P:DNA replication"/>
    <property type="evidence" value="ECO:0007669"/>
    <property type="project" value="UniProtKB-KW"/>
</dbReference>
<dbReference type="GO" id="GO:0006351">
    <property type="term" value="P:DNA-templated transcription"/>
    <property type="evidence" value="ECO:0007669"/>
    <property type="project" value="UniProtKB-UniRule"/>
</dbReference>
<dbReference type="GO" id="GO:0006275">
    <property type="term" value="P:regulation of DNA replication"/>
    <property type="evidence" value="ECO:0007669"/>
    <property type="project" value="UniProtKB-UniRule"/>
</dbReference>
<dbReference type="GO" id="GO:0039693">
    <property type="term" value="P:viral DNA genome replication"/>
    <property type="evidence" value="ECO:0007669"/>
    <property type="project" value="UniProtKB-UniRule"/>
</dbReference>
<dbReference type="Gene3D" id="3.30.70.330">
    <property type="match status" value="1"/>
</dbReference>
<dbReference type="Gene3D" id="1.10.287.30">
    <property type="entry name" value="E2 (early) protein, N terminal domain, subdomain 1"/>
    <property type="match status" value="1"/>
</dbReference>
<dbReference type="Gene3D" id="2.170.200.10">
    <property type="entry name" value="Papillomavirus E2 early protein domain"/>
    <property type="match status" value="1"/>
</dbReference>
<dbReference type="HAMAP" id="MF_04001">
    <property type="entry name" value="PPV_E2"/>
    <property type="match status" value="1"/>
</dbReference>
<dbReference type="InterPro" id="IPR035975">
    <property type="entry name" value="E2/EBNA1_C_sf"/>
</dbReference>
<dbReference type="InterPro" id="IPR012677">
    <property type="entry name" value="Nucleotide-bd_a/b_plait_sf"/>
</dbReference>
<dbReference type="InterPro" id="IPR000427">
    <property type="entry name" value="Papillomavirus_E2_C"/>
</dbReference>
<dbReference type="InterPro" id="IPR001866">
    <property type="entry name" value="PPV_E2_N"/>
</dbReference>
<dbReference type="InterPro" id="IPR033668">
    <property type="entry name" value="Reg_prot_E2"/>
</dbReference>
<dbReference type="InterPro" id="IPR036050">
    <property type="entry name" value="Regulatory_protein_E2_N"/>
</dbReference>
<dbReference type="InterPro" id="IPR042503">
    <property type="entry name" value="Regulatory_protein_E2_N_1"/>
</dbReference>
<dbReference type="InterPro" id="IPR042504">
    <property type="entry name" value="Regulatory_protein_E2_N_2"/>
</dbReference>
<dbReference type="Pfam" id="PF00511">
    <property type="entry name" value="PPV_E2_C"/>
    <property type="match status" value="1"/>
</dbReference>
<dbReference type="Pfam" id="PF00508">
    <property type="entry name" value="PPV_E2_N"/>
    <property type="match status" value="1"/>
</dbReference>
<dbReference type="SUPFAM" id="SSF51332">
    <property type="entry name" value="E2 regulatory, transactivation domain"/>
    <property type="match status" value="1"/>
</dbReference>
<dbReference type="SUPFAM" id="SSF54957">
    <property type="entry name" value="Viral DNA-binding domain"/>
    <property type="match status" value="1"/>
</dbReference>
<comment type="function">
    <text evidence="1">Plays a role in the initiation of viral DNA replication. A dimer of E2 interacts with a dimer of E1 in order to improve specificity of E1 DNA binding activity. Once the complex recognizes and binds DNA at specific sites, the E2 dimer is removed from DNA. E2 also regulates viral transcription through binding to the E2RE response element (5'-ACCNNNNNNGGT-3') present in multiple copies in the regulatory regions of the viral genome. Activates or represses transcription depending on E2RE's position with regards to proximal promoter elements including the TATA-box. Repression occurs by sterically hindering the assembly of the transcription initiation complex.</text>
</comment>
<comment type="subunit">
    <text evidence="1">Binds DNA as homodimer. Interacts with protein E1; this interaction greatly increases E1 DNA-binding activity. Interacts with protein L1; this interaction enhances E2-dependent replication and transcription activation. Interacts with protein L2; this interaction inhibits E2 transcriptional activity but not DNA replication function E2. Interacts with protein E7; this interaction inhibits E7 oncogenic activity. Interacts with host TAF1; this interaction modulates E2-dependent transcriptional regulation. Interacts with host BRD4; this interaction mediates E2 transcriptional activation function. Additionally, the interaction with host BRD4 on mitotic chromosomes mediates tethering of the viral genome. Interacts with host TOPBP1; this interaction is required for optimal viral DNA replication.</text>
</comment>
<comment type="subcellular location">
    <subcellularLocation>
        <location evidence="1">Host nucleus</location>
    </subcellularLocation>
</comment>
<comment type="PTM">
    <text evidence="1">Phosphorylated.</text>
</comment>
<comment type="similarity">
    <text evidence="1">Belongs to the papillomaviridae E2 protein family.</text>
</comment>
<organism>
    <name type="scientific">Canine oral papillomavirus (strain Y62)</name>
    <name type="common">COPV</name>
    <dbReference type="NCBI Taxonomy" id="766192"/>
    <lineage>
        <taxon>Viruses</taxon>
        <taxon>Monodnaviria</taxon>
        <taxon>Shotokuvirae</taxon>
        <taxon>Cossaviricota</taxon>
        <taxon>Papovaviricetes</taxon>
        <taxon>Zurhausenvirales</taxon>
        <taxon>Papillomaviridae</taxon>
        <taxon>Firstpapillomavirinae</taxon>
        <taxon>Lambdapapillomavirus</taxon>
        <taxon>Canine oral papillomavirus</taxon>
    </lineage>
</organism>
<proteinExistence type="inferred from homology"/>
<sequence length="385" mass="43095">MEKLSEALDLLQEELLSLYEQNSQSLADQSRHWSLLRKEQVLLYYARGKGIMRIGMQPVPPQSVSQAKAKQAIEQSLYIDSLLHSKYANEPWTLCDTSRERLVAEPAYTFKKGGKQIDVRYGDSEENIVRYVLWLDIYYQDEFDTWEKAHGKLDHKGLSYMHGTQQVYYVDFEEEANKYSETGKYEILNQPTTIPTTSAAGTSGPELPGHSASGSGACSLTPRKGPSRRPGRRSSRFPRRSGGRGRLGRGGSGELPPQPQPSSSWSPPSPQQVGSKHQLRTTSSAGGRLGRLLQEAYDPPVLVLAGDPNSLKCIRYRLSHKHRGLYLGASTTWKWTSGGDGASKHDRGSARMLLAFLSDQQREDFMDRVTFPKSVRVFRGGLDEL</sequence>
<protein>
    <recommendedName>
        <fullName evidence="1">Regulatory protein E2</fullName>
    </recommendedName>
</protein>